<feature type="chain" id="PRO_0000391951" description="Ubiquitin-like modifier-activating enzyme 5">
    <location>
        <begin position="1"/>
        <end position="406"/>
    </location>
</feature>
<feature type="region of interest" description="Disordered" evidence="2">
    <location>
        <begin position="373"/>
        <end position="397"/>
    </location>
</feature>
<feature type="compositionally biased region" description="Low complexity" evidence="2">
    <location>
        <begin position="378"/>
        <end position="393"/>
    </location>
</feature>
<feature type="active site" description="Glycyl thioester intermediate" evidence="1">
    <location>
        <position position="249"/>
    </location>
</feature>
<feature type="binding site" evidence="1">
    <location>
        <position position="82"/>
    </location>
    <ligand>
        <name>ATP</name>
        <dbReference type="ChEBI" id="CHEBI:30616"/>
    </ligand>
</feature>
<feature type="binding site" evidence="1">
    <location>
        <position position="103"/>
    </location>
    <ligand>
        <name>ATP</name>
        <dbReference type="ChEBI" id="CHEBI:30616"/>
    </ligand>
</feature>
<feature type="binding site" evidence="1">
    <location>
        <position position="126"/>
    </location>
    <ligand>
        <name>ATP</name>
        <dbReference type="ChEBI" id="CHEBI:30616"/>
    </ligand>
</feature>
<feature type="binding site" evidence="1">
    <location>
        <position position="149"/>
    </location>
    <ligand>
        <name>ATP</name>
        <dbReference type="ChEBI" id="CHEBI:30616"/>
    </ligand>
</feature>
<feature type="binding site" evidence="1">
    <location>
        <position position="183"/>
    </location>
    <ligand>
        <name>ATP</name>
        <dbReference type="ChEBI" id="CHEBI:30616"/>
    </ligand>
</feature>
<feature type="binding site" evidence="1">
    <location>
        <position position="225"/>
    </location>
    <ligand>
        <name>Zn(2+)</name>
        <dbReference type="ChEBI" id="CHEBI:29105"/>
    </ligand>
</feature>
<feature type="binding site" evidence="1">
    <location>
        <position position="228"/>
    </location>
    <ligand>
        <name>Zn(2+)</name>
        <dbReference type="ChEBI" id="CHEBI:29105"/>
    </ligand>
</feature>
<feature type="binding site" evidence="1">
    <location>
        <position position="302"/>
    </location>
    <ligand>
        <name>Zn(2+)</name>
        <dbReference type="ChEBI" id="CHEBI:29105"/>
    </ligand>
</feature>
<feature type="binding site" evidence="1">
    <location>
        <position position="307"/>
    </location>
    <ligand>
        <name>Zn(2+)</name>
        <dbReference type="ChEBI" id="CHEBI:29105"/>
    </ligand>
</feature>
<proteinExistence type="inferred from homology"/>
<comment type="function">
    <text evidence="1">E1-like enzyme which activates UFM1.</text>
</comment>
<comment type="similarity">
    <text evidence="3">Belongs to the ubiquitin-activating E1 family. UBA5 subfamily.</text>
</comment>
<keyword id="KW-0067">ATP-binding</keyword>
<keyword id="KW-0479">Metal-binding</keyword>
<keyword id="KW-0547">Nucleotide-binding</keyword>
<keyword id="KW-1185">Reference proteome</keyword>
<keyword id="KW-0833">Ubl conjugation pathway</keyword>
<keyword id="KW-0862">Zinc</keyword>
<name>UBA5_DROWI</name>
<evidence type="ECO:0000250" key="1"/>
<evidence type="ECO:0000256" key="2">
    <source>
        <dbReference type="SAM" id="MobiDB-lite"/>
    </source>
</evidence>
<evidence type="ECO:0000305" key="3"/>
<organism>
    <name type="scientific">Drosophila willistoni</name>
    <name type="common">Fruit fly</name>
    <dbReference type="NCBI Taxonomy" id="7260"/>
    <lineage>
        <taxon>Eukaryota</taxon>
        <taxon>Metazoa</taxon>
        <taxon>Ecdysozoa</taxon>
        <taxon>Arthropoda</taxon>
        <taxon>Hexapoda</taxon>
        <taxon>Insecta</taxon>
        <taxon>Pterygota</taxon>
        <taxon>Neoptera</taxon>
        <taxon>Endopterygota</taxon>
        <taxon>Diptera</taxon>
        <taxon>Brachycera</taxon>
        <taxon>Muscomorpha</taxon>
        <taxon>Ephydroidea</taxon>
        <taxon>Drosophilidae</taxon>
        <taxon>Drosophila</taxon>
        <taxon>Sophophora</taxon>
    </lineage>
</organism>
<sequence>MSAIDELQALIVELKSELEAQKTETRQQQAQAQQARQRIDRMSAEVVDSNPYSRLMALQRMNIVKDYERIREKTVAVVGVGGVGSVTADMLTRCGIGKLILFDYDKVELANMNRLFFTPDQAGLSKVEAAARTLTFINPDVKIETHNYNITTVDNFDNFLTTISQSGTEPGTPVDLILSCVDNFEARMAINAACNEHSLNWFESGVSENAVSGHIQFIRPGDTACFACAPPLVVAENIDERTLKREGVCAASLPTTMGITAGFLVQNALKYLLNFGEVSDYLGYNALNDFFPKMTLKPNPQCDDRHCLLRQKEFQTKPKPVKKEVEIVAEEPLHATNEWGIELVAEDAPATEDADEPKPIVSDIGEGLRLAYEAPSKSTETTSEATTTTTGDETSLDDLMAQMKSM</sequence>
<gene>
    <name type="ORF">GK10218</name>
</gene>
<accession>B4NDE5</accession>
<reference key="1">
    <citation type="journal article" date="2007" name="Nature">
        <title>Evolution of genes and genomes on the Drosophila phylogeny.</title>
        <authorList>
            <consortium name="Drosophila 12 genomes consortium"/>
        </authorList>
    </citation>
    <scope>NUCLEOTIDE SEQUENCE [LARGE SCALE GENOMIC DNA]</scope>
    <source>
        <strain>Tucson 14030-0811.24</strain>
    </source>
</reference>
<protein>
    <recommendedName>
        <fullName>Ubiquitin-like modifier-activating enzyme 5</fullName>
        <shortName>Ubiquitin-activating enzyme 5</shortName>
    </recommendedName>
</protein>
<dbReference type="EMBL" id="CH964239">
    <property type="protein sequence ID" value="EDW82851.1"/>
    <property type="molecule type" value="Genomic_DNA"/>
</dbReference>
<dbReference type="SMR" id="B4NDE5"/>
<dbReference type="STRING" id="7260.B4NDE5"/>
<dbReference type="EnsemblMetazoa" id="FBtr0240869">
    <property type="protein sequence ID" value="FBpp0239361"/>
    <property type="gene ID" value="FBgn0212233"/>
</dbReference>
<dbReference type="EnsemblMetazoa" id="XM_002071829.3">
    <property type="protein sequence ID" value="XP_002071865.1"/>
    <property type="gene ID" value="LOC6648687"/>
</dbReference>
<dbReference type="GeneID" id="6648687"/>
<dbReference type="KEGG" id="dwi:6648687"/>
<dbReference type="CTD" id="79876"/>
<dbReference type="eggNOG" id="KOG2336">
    <property type="taxonomic scope" value="Eukaryota"/>
</dbReference>
<dbReference type="HOGENOM" id="CLU_013325_0_1_1"/>
<dbReference type="OMA" id="MNIVKDY"/>
<dbReference type="OrthoDB" id="206053at2759"/>
<dbReference type="PhylomeDB" id="B4NDE5"/>
<dbReference type="Proteomes" id="UP000007798">
    <property type="component" value="Unassembled WGS sequence"/>
</dbReference>
<dbReference type="GO" id="GO:0005829">
    <property type="term" value="C:cytosol"/>
    <property type="evidence" value="ECO:0007669"/>
    <property type="project" value="TreeGrafter"/>
</dbReference>
<dbReference type="GO" id="GO:0005524">
    <property type="term" value="F:ATP binding"/>
    <property type="evidence" value="ECO:0007669"/>
    <property type="project" value="UniProtKB-KW"/>
</dbReference>
<dbReference type="GO" id="GO:0046872">
    <property type="term" value="F:metal ion binding"/>
    <property type="evidence" value="ECO:0007669"/>
    <property type="project" value="UniProtKB-KW"/>
</dbReference>
<dbReference type="GO" id="GO:0071566">
    <property type="term" value="F:UFM1 activating enzyme activity"/>
    <property type="evidence" value="ECO:0007669"/>
    <property type="project" value="TreeGrafter"/>
</dbReference>
<dbReference type="GO" id="GO:0071569">
    <property type="term" value="P:protein ufmylation"/>
    <property type="evidence" value="ECO:0007669"/>
    <property type="project" value="TreeGrafter"/>
</dbReference>
<dbReference type="CDD" id="cd00757">
    <property type="entry name" value="ThiF_MoeB_HesA_family"/>
    <property type="match status" value="1"/>
</dbReference>
<dbReference type="FunFam" id="3.40.50.720:FF:000066">
    <property type="entry name" value="Putative ubiquitin-like modifier-activating enzyme 5"/>
    <property type="match status" value="1"/>
</dbReference>
<dbReference type="Gene3D" id="3.40.50.720">
    <property type="entry name" value="NAD(P)-binding Rossmann-like Domain"/>
    <property type="match status" value="1"/>
</dbReference>
<dbReference type="InterPro" id="IPR029752">
    <property type="entry name" value="D-isomer_DH_CS1"/>
</dbReference>
<dbReference type="InterPro" id="IPR045886">
    <property type="entry name" value="ThiF/MoeB/HesA"/>
</dbReference>
<dbReference type="InterPro" id="IPR000594">
    <property type="entry name" value="ThiF_NAD_FAD-bd"/>
</dbReference>
<dbReference type="InterPro" id="IPR035985">
    <property type="entry name" value="Ubiquitin-activating_enz"/>
</dbReference>
<dbReference type="PANTHER" id="PTHR10953">
    <property type="entry name" value="UBIQUITIN-ACTIVATING ENZYME E1"/>
    <property type="match status" value="1"/>
</dbReference>
<dbReference type="PANTHER" id="PTHR10953:SF9">
    <property type="entry name" value="UBIQUITIN-LIKE MODIFIER-ACTIVATING ENZYME 5"/>
    <property type="match status" value="1"/>
</dbReference>
<dbReference type="Pfam" id="PF00899">
    <property type="entry name" value="ThiF"/>
    <property type="match status" value="1"/>
</dbReference>
<dbReference type="SUPFAM" id="SSF69572">
    <property type="entry name" value="Activating enzymes of the ubiquitin-like proteins"/>
    <property type="match status" value="1"/>
</dbReference>